<reference key="1">
    <citation type="journal article" date="2001" name="Science">
        <title>Mechanisms of evolution in Rickettsia conorii and R. prowazekii.</title>
        <authorList>
            <person name="Ogata H."/>
            <person name="Audic S."/>
            <person name="Renesto-Audiffren P."/>
            <person name="Fournier P.-E."/>
            <person name="Barbe V."/>
            <person name="Samson D."/>
            <person name="Roux V."/>
            <person name="Cossart P."/>
            <person name="Weissenbach J."/>
            <person name="Claverie J.-M."/>
            <person name="Raoult D."/>
        </authorList>
    </citation>
    <scope>NUCLEOTIDE SEQUENCE [LARGE SCALE GENOMIC DNA]</scope>
    <source>
        <strain>ATCC VR-613 / Malish 7</strain>
    </source>
</reference>
<name>SYK_RICCN</name>
<protein>
    <recommendedName>
        <fullName evidence="1">Lysine--tRNA ligase</fullName>
        <ecNumber evidence="1">6.1.1.6</ecNumber>
    </recommendedName>
    <alternativeName>
        <fullName evidence="1">Lysyl-tRNA synthetase</fullName>
        <shortName evidence="1">LysRS</shortName>
    </alternativeName>
</protein>
<comment type="catalytic activity">
    <reaction evidence="1">
        <text>tRNA(Lys) + L-lysine + ATP = L-lysyl-tRNA(Lys) + AMP + diphosphate</text>
        <dbReference type="Rhea" id="RHEA:20792"/>
        <dbReference type="Rhea" id="RHEA-COMP:9696"/>
        <dbReference type="Rhea" id="RHEA-COMP:9697"/>
        <dbReference type="ChEBI" id="CHEBI:30616"/>
        <dbReference type="ChEBI" id="CHEBI:32551"/>
        <dbReference type="ChEBI" id="CHEBI:33019"/>
        <dbReference type="ChEBI" id="CHEBI:78442"/>
        <dbReference type="ChEBI" id="CHEBI:78529"/>
        <dbReference type="ChEBI" id="CHEBI:456215"/>
        <dbReference type="EC" id="6.1.1.6"/>
    </reaction>
</comment>
<comment type="subcellular location">
    <subcellularLocation>
        <location evidence="1">Cytoplasm</location>
    </subcellularLocation>
</comment>
<comment type="similarity">
    <text evidence="1">Belongs to the class-I aminoacyl-tRNA synthetase family.</text>
</comment>
<comment type="sequence caution" evidence="2">
    <conflict type="erroneous initiation">
        <sequence resource="EMBL-CDS" id="AAL03043"/>
    </conflict>
</comment>
<evidence type="ECO:0000255" key="1">
    <source>
        <dbReference type="HAMAP-Rule" id="MF_00177"/>
    </source>
</evidence>
<evidence type="ECO:0000305" key="2"/>
<dbReference type="EC" id="6.1.1.6" evidence="1"/>
<dbReference type="EMBL" id="AE006914">
    <property type="protein sequence ID" value="AAL03043.1"/>
    <property type="status" value="ALT_INIT"/>
    <property type="molecule type" value="Genomic_DNA"/>
</dbReference>
<dbReference type="PIR" id="A97763">
    <property type="entry name" value="A97763"/>
</dbReference>
<dbReference type="RefSeq" id="WP_041471717.1">
    <property type="nucleotide sequence ID" value="NC_003103.1"/>
</dbReference>
<dbReference type="SMR" id="Q92IB5"/>
<dbReference type="GeneID" id="927626"/>
<dbReference type="KEGG" id="rco:RC0505"/>
<dbReference type="PATRIC" id="fig|272944.4.peg.578"/>
<dbReference type="HOGENOM" id="CLU_025562_2_0_5"/>
<dbReference type="Proteomes" id="UP000000816">
    <property type="component" value="Chromosome"/>
</dbReference>
<dbReference type="GO" id="GO:0005737">
    <property type="term" value="C:cytoplasm"/>
    <property type="evidence" value="ECO:0007669"/>
    <property type="project" value="UniProtKB-SubCell"/>
</dbReference>
<dbReference type="GO" id="GO:0005524">
    <property type="term" value="F:ATP binding"/>
    <property type="evidence" value="ECO:0007669"/>
    <property type="project" value="UniProtKB-UniRule"/>
</dbReference>
<dbReference type="GO" id="GO:0004824">
    <property type="term" value="F:lysine-tRNA ligase activity"/>
    <property type="evidence" value="ECO:0007669"/>
    <property type="project" value="UniProtKB-UniRule"/>
</dbReference>
<dbReference type="GO" id="GO:0000049">
    <property type="term" value="F:tRNA binding"/>
    <property type="evidence" value="ECO:0007669"/>
    <property type="project" value="InterPro"/>
</dbReference>
<dbReference type="GO" id="GO:0006430">
    <property type="term" value="P:lysyl-tRNA aminoacylation"/>
    <property type="evidence" value="ECO:0007669"/>
    <property type="project" value="UniProtKB-UniRule"/>
</dbReference>
<dbReference type="Gene3D" id="1.10.10.350">
    <property type="match status" value="1"/>
</dbReference>
<dbReference type="Gene3D" id="3.40.50.620">
    <property type="entry name" value="HUPs"/>
    <property type="match status" value="2"/>
</dbReference>
<dbReference type="HAMAP" id="MF_00177">
    <property type="entry name" value="Lys_tRNA_synth_class1"/>
    <property type="match status" value="1"/>
</dbReference>
<dbReference type="InterPro" id="IPR020751">
    <property type="entry name" value="aa-tRNA-synth_I_codon-bd_sub2"/>
</dbReference>
<dbReference type="InterPro" id="IPR001412">
    <property type="entry name" value="aa-tRNA-synth_I_CS"/>
</dbReference>
<dbReference type="InterPro" id="IPR008925">
    <property type="entry name" value="aa_tRNA-synth_I_cd-bd_sf"/>
</dbReference>
<dbReference type="InterPro" id="IPR002904">
    <property type="entry name" value="Lys-tRNA-ligase"/>
</dbReference>
<dbReference type="InterPro" id="IPR014729">
    <property type="entry name" value="Rossmann-like_a/b/a_fold"/>
</dbReference>
<dbReference type="NCBIfam" id="TIGR00467">
    <property type="entry name" value="lysS_arch"/>
    <property type="match status" value="1"/>
</dbReference>
<dbReference type="NCBIfam" id="NF001968">
    <property type="entry name" value="PRK00750.1-2"/>
    <property type="match status" value="1"/>
</dbReference>
<dbReference type="PANTHER" id="PTHR37940">
    <property type="entry name" value="LYSINE--TRNA LIGASE"/>
    <property type="match status" value="1"/>
</dbReference>
<dbReference type="PANTHER" id="PTHR37940:SF1">
    <property type="entry name" value="LYSINE--TRNA LIGASE"/>
    <property type="match status" value="1"/>
</dbReference>
<dbReference type="Pfam" id="PF01921">
    <property type="entry name" value="tRNA-synt_1f"/>
    <property type="match status" value="1"/>
</dbReference>
<dbReference type="SUPFAM" id="SSF48163">
    <property type="entry name" value="An anticodon-binding domain of class I aminoacyl-tRNA synthetases"/>
    <property type="match status" value="1"/>
</dbReference>
<dbReference type="SUPFAM" id="SSF52374">
    <property type="entry name" value="Nucleotidylyl transferase"/>
    <property type="match status" value="1"/>
</dbReference>
<dbReference type="PROSITE" id="PS00178">
    <property type="entry name" value="AA_TRNA_LIGASE_I"/>
    <property type="match status" value="1"/>
</dbReference>
<organism>
    <name type="scientific">Rickettsia conorii (strain ATCC VR-613 / Malish 7)</name>
    <dbReference type="NCBI Taxonomy" id="272944"/>
    <lineage>
        <taxon>Bacteria</taxon>
        <taxon>Pseudomonadati</taxon>
        <taxon>Pseudomonadota</taxon>
        <taxon>Alphaproteobacteria</taxon>
        <taxon>Rickettsiales</taxon>
        <taxon>Rickettsiaceae</taxon>
        <taxon>Rickettsieae</taxon>
        <taxon>Rickettsia</taxon>
        <taxon>spotted fever group</taxon>
    </lineage>
</organism>
<sequence>MSEIWEDAIKSNAWPFVEAKKILDSLNGQIPEKGYVLFETGYGPSGLPHIGTFGENARMVMVQKAFEQLSDIPTKLICFSDDMDGLRKVPSNIPNPEMVAQYMDMPLTSIPDTFGECESYGHYMNAKLRSFLDKFGFEYEFYSSTNCYKAGMFDAMLIMVLEKYDEIMELMLPTFREERKATYSPFMPICPKTGKVLQVPIEKWDAKAGTVTYKDKAGNYIEVPVTGGHCKLQWKPDFGMRWAALKVDYEMYGKDHLANARLYSEICRILGGKPPVQLCYELFLDENGKKISKSKGNSISIDDWLKYAPVESMALFMYQNPTRAKRLFFDVIPKNVDEYITFNQKYHLEEDRAKRFANPVYHIHHGNVPKIETFGITYSLLLNLTSVCNPSDKSVLWGFISKYEPKATPNTNPYLDHLAEFAIRYYNDFIKAHKLYLSPSEKHKVILQDILDMLSDIADQTEAEAIQKAIYDIGMKAGYENLRDYFKDLYQILLGQNEGPRFGTFIKLYGVQEMKKLVEGQL</sequence>
<proteinExistence type="inferred from homology"/>
<keyword id="KW-0030">Aminoacyl-tRNA synthetase</keyword>
<keyword id="KW-0067">ATP-binding</keyword>
<keyword id="KW-0963">Cytoplasm</keyword>
<keyword id="KW-0436">Ligase</keyword>
<keyword id="KW-0547">Nucleotide-binding</keyword>
<keyword id="KW-0648">Protein biosynthesis</keyword>
<gene>
    <name evidence="1" type="primary">lysS</name>
    <name type="ordered locus">RC0505</name>
</gene>
<feature type="chain" id="PRO_0000152742" description="Lysine--tRNA ligase">
    <location>
        <begin position="1"/>
        <end position="522"/>
    </location>
</feature>
<feature type="short sequence motif" description="'HIGH' region">
    <location>
        <begin position="44"/>
        <end position="52"/>
    </location>
</feature>
<feature type="short sequence motif" description="'KMSKS' region">
    <location>
        <begin position="290"/>
        <end position="294"/>
    </location>
</feature>
<feature type="binding site" evidence="1">
    <location>
        <position position="293"/>
    </location>
    <ligand>
        <name>ATP</name>
        <dbReference type="ChEBI" id="CHEBI:30616"/>
    </ligand>
</feature>
<accession>Q92IB5</accession>